<evidence type="ECO:0000255" key="1">
    <source>
        <dbReference type="HAMAP-Rule" id="MF_01007"/>
    </source>
</evidence>
<keyword id="KW-0963">Cytoplasm</keyword>
<keyword id="KW-0489">Methyltransferase</keyword>
<keyword id="KW-0698">rRNA processing</keyword>
<keyword id="KW-0949">S-adenosyl-L-methionine</keyword>
<keyword id="KW-0808">Transferase</keyword>
<comment type="function">
    <text evidence="1">Specifically methylates the N4 position of cytidine in position 1402 (C1402) of 16S rRNA.</text>
</comment>
<comment type="catalytic activity">
    <reaction evidence="1">
        <text>cytidine(1402) in 16S rRNA + S-adenosyl-L-methionine = N(4)-methylcytidine(1402) in 16S rRNA + S-adenosyl-L-homocysteine + H(+)</text>
        <dbReference type="Rhea" id="RHEA:42928"/>
        <dbReference type="Rhea" id="RHEA-COMP:10286"/>
        <dbReference type="Rhea" id="RHEA-COMP:10287"/>
        <dbReference type="ChEBI" id="CHEBI:15378"/>
        <dbReference type="ChEBI" id="CHEBI:57856"/>
        <dbReference type="ChEBI" id="CHEBI:59789"/>
        <dbReference type="ChEBI" id="CHEBI:74506"/>
        <dbReference type="ChEBI" id="CHEBI:82748"/>
        <dbReference type="EC" id="2.1.1.199"/>
    </reaction>
</comment>
<comment type="subcellular location">
    <subcellularLocation>
        <location evidence="1">Cytoplasm</location>
    </subcellularLocation>
</comment>
<comment type="similarity">
    <text evidence="1">Belongs to the methyltransferase superfamily. RsmH family.</text>
</comment>
<protein>
    <recommendedName>
        <fullName evidence="1">Ribosomal RNA small subunit methyltransferase H</fullName>
        <ecNumber evidence="1">2.1.1.199</ecNumber>
    </recommendedName>
    <alternativeName>
        <fullName evidence="1">16S rRNA m(4)C1402 methyltransferase</fullName>
    </alternativeName>
    <alternativeName>
        <fullName evidence="1">rRNA (cytosine-N(4)-)-methyltransferase RsmH</fullName>
    </alternativeName>
</protein>
<accession>A3NZM3</accession>
<proteinExistence type="inferred from homology"/>
<reference key="1">
    <citation type="journal article" date="2010" name="Genome Biol. Evol.">
        <title>Continuing evolution of Burkholderia mallei through genome reduction and large-scale rearrangements.</title>
        <authorList>
            <person name="Losada L."/>
            <person name="Ronning C.M."/>
            <person name="DeShazer D."/>
            <person name="Woods D."/>
            <person name="Fedorova N."/>
            <person name="Kim H.S."/>
            <person name="Shabalina S.A."/>
            <person name="Pearson T.R."/>
            <person name="Brinkac L."/>
            <person name="Tan P."/>
            <person name="Nandi T."/>
            <person name="Crabtree J."/>
            <person name="Badger J."/>
            <person name="Beckstrom-Sternberg S."/>
            <person name="Saqib M."/>
            <person name="Schutzer S.E."/>
            <person name="Keim P."/>
            <person name="Nierman W.C."/>
        </authorList>
    </citation>
    <scope>NUCLEOTIDE SEQUENCE [LARGE SCALE GENOMIC DNA]</scope>
    <source>
        <strain>1106a</strain>
    </source>
</reference>
<organism>
    <name type="scientific">Burkholderia pseudomallei (strain 1106a)</name>
    <dbReference type="NCBI Taxonomy" id="357348"/>
    <lineage>
        <taxon>Bacteria</taxon>
        <taxon>Pseudomonadati</taxon>
        <taxon>Pseudomonadota</taxon>
        <taxon>Betaproteobacteria</taxon>
        <taxon>Burkholderiales</taxon>
        <taxon>Burkholderiaceae</taxon>
        <taxon>Burkholderia</taxon>
        <taxon>pseudomallei group</taxon>
    </lineage>
</organism>
<gene>
    <name evidence="1" type="primary">rsmH</name>
    <name type="synonym">mraW</name>
    <name type="ordered locus">BURPS1106A_3558</name>
</gene>
<dbReference type="EC" id="2.1.1.199" evidence="1"/>
<dbReference type="EMBL" id="CP000572">
    <property type="protein sequence ID" value="ABN91758.1"/>
    <property type="molecule type" value="Genomic_DNA"/>
</dbReference>
<dbReference type="RefSeq" id="WP_004522013.1">
    <property type="nucleotide sequence ID" value="NC_009076.1"/>
</dbReference>
<dbReference type="SMR" id="A3NZM3"/>
<dbReference type="KEGG" id="bpl:BURPS1106A_3558"/>
<dbReference type="HOGENOM" id="CLU_038422_2_0_4"/>
<dbReference type="Proteomes" id="UP000006738">
    <property type="component" value="Chromosome I"/>
</dbReference>
<dbReference type="GO" id="GO:0005737">
    <property type="term" value="C:cytoplasm"/>
    <property type="evidence" value="ECO:0007669"/>
    <property type="project" value="UniProtKB-SubCell"/>
</dbReference>
<dbReference type="GO" id="GO:0071424">
    <property type="term" value="F:rRNA (cytosine-N4-)-methyltransferase activity"/>
    <property type="evidence" value="ECO:0007669"/>
    <property type="project" value="UniProtKB-UniRule"/>
</dbReference>
<dbReference type="GO" id="GO:0070475">
    <property type="term" value="P:rRNA base methylation"/>
    <property type="evidence" value="ECO:0007669"/>
    <property type="project" value="UniProtKB-UniRule"/>
</dbReference>
<dbReference type="Gene3D" id="1.10.150.170">
    <property type="entry name" value="Putative methyltransferase TM0872, insert domain"/>
    <property type="match status" value="1"/>
</dbReference>
<dbReference type="Gene3D" id="3.40.50.150">
    <property type="entry name" value="Vaccinia Virus protein VP39"/>
    <property type="match status" value="1"/>
</dbReference>
<dbReference type="HAMAP" id="MF_01007">
    <property type="entry name" value="16SrRNA_methyltr_H"/>
    <property type="match status" value="1"/>
</dbReference>
<dbReference type="InterPro" id="IPR002903">
    <property type="entry name" value="RsmH"/>
</dbReference>
<dbReference type="InterPro" id="IPR023397">
    <property type="entry name" value="SAM-dep_MeTrfase_MraW_recog"/>
</dbReference>
<dbReference type="InterPro" id="IPR029063">
    <property type="entry name" value="SAM-dependent_MTases_sf"/>
</dbReference>
<dbReference type="NCBIfam" id="TIGR00006">
    <property type="entry name" value="16S rRNA (cytosine(1402)-N(4))-methyltransferase RsmH"/>
    <property type="match status" value="1"/>
</dbReference>
<dbReference type="PANTHER" id="PTHR11265:SF0">
    <property type="entry name" value="12S RRNA N4-METHYLCYTIDINE METHYLTRANSFERASE"/>
    <property type="match status" value="1"/>
</dbReference>
<dbReference type="PANTHER" id="PTHR11265">
    <property type="entry name" value="S-ADENOSYL-METHYLTRANSFERASE MRAW"/>
    <property type="match status" value="1"/>
</dbReference>
<dbReference type="Pfam" id="PF01795">
    <property type="entry name" value="Methyltransf_5"/>
    <property type="match status" value="1"/>
</dbReference>
<dbReference type="PIRSF" id="PIRSF004486">
    <property type="entry name" value="MraW"/>
    <property type="match status" value="1"/>
</dbReference>
<dbReference type="SUPFAM" id="SSF81799">
    <property type="entry name" value="Putative methyltransferase TM0872, insert domain"/>
    <property type="match status" value="1"/>
</dbReference>
<dbReference type="SUPFAM" id="SSF53335">
    <property type="entry name" value="S-adenosyl-L-methionine-dependent methyltransferases"/>
    <property type="match status" value="1"/>
</dbReference>
<name>RSMH_BURP0</name>
<sequence>MGNEFQHRTVLLDEAVDALVTRPDGVYVDGTFGRGGHSRAVLARLGDAGRLIAFDKDPRAIETAESIEDARFEIVHDSFAAMKGALDARGVGRVSGVLLDLGVSSPQVDDPARGFSFRANGPLDMRMDPTRGESAAEWLARASVQELTEVIRDYGEERFAFQIAKAIVARRAESDRLGPLDSTGELAQIVGHVVKTREKGKDPATRTFQAIRIHVNQELADLQVVLEAALSLLEQGGRLVVISFHSLEDRIVKRFLQAHASAPAVDRRLPIRAADLPSPPLKLLGRMFPNDAEVAANPRARSAVMRIAERVAP</sequence>
<feature type="chain" id="PRO_0000386778" description="Ribosomal RNA small subunit methyltransferase H">
    <location>
        <begin position="1"/>
        <end position="313"/>
    </location>
</feature>
<feature type="binding site" evidence="1">
    <location>
        <begin position="35"/>
        <end position="37"/>
    </location>
    <ligand>
        <name>S-adenosyl-L-methionine</name>
        <dbReference type="ChEBI" id="CHEBI:59789"/>
    </ligand>
</feature>
<feature type="binding site" evidence="1">
    <location>
        <position position="55"/>
    </location>
    <ligand>
        <name>S-adenosyl-L-methionine</name>
        <dbReference type="ChEBI" id="CHEBI:59789"/>
    </ligand>
</feature>
<feature type="binding site" evidence="1">
    <location>
        <position position="79"/>
    </location>
    <ligand>
        <name>S-adenosyl-L-methionine</name>
        <dbReference type="ChEBI" id="CHEBI:59789"/>
    </ligand>
</feature>
<feature type="binding site" evidence="1">
    <location>
        <position position="100"/>
    </location>
    <ligand>
        <name>S-adenosyl-L-methionine</name>
        <dbReference type="ChEBI" id="CHEBI:59789"/>
    </ligand>
</feature>
<feature type="binding site" evidence="1">
    <location>
        <position position="107"/>
    </location>
    <ligand>
        <name>S-adenosyl-L-methionine</name>
        <dbReference type="ChEBI" id="CHEBI:59789"/>
    </ligand>
</feature>